<feature type="chain" id="PRO_0000351385" description="Autoinducer 2 import system permease protein LsrD">
    <location>
        <begin position="1"/>
        <end position="333"/>
    </location>
</feature>
<feature type="transmembrane region" description="Helical" evidence="2">
    <location>
        <begin position="7"/>
        <end position="27"/>
    </location>
</feature>
<feature type="transmembrane region" description="Helical" evidence="2">
    <location>
        <begin position="45"/>
        <end position="65"/>
    </location>
</feature>
<feature type="transmembrane region" description="Helical" evidence="2">
    <location>
        <begin position="67"/>
        <end position="87"/>
    </location>
</feature>
<feature type="transmembrane region" description="Helical" evidence="2">
    <location>
        <begin position="90"/>
        <end position="110"/>
    </location>
</feature>
<feature type="transmembrane region" description="Helical" evidence="2">
    <location>
        <begin position="118"/>
        <end position="138"/>
    </location>
</feature>
<feature type="transmembrane region" description="Helical" evidence="2">
    <location>
        <begin position="162"/>
        <end position="182"/>
    </location>
</feature>
<feature type="transmembrane region" description="Helical" evidence="2">
    <location>
        <begin position="212"/>
        <end position="232"/>
    </location>
</feature>
<feature type="transmembrane region" description="Helical" evidence="2">
    <location>
        <begin position="240"/>
        <end position="260"/>
    </location>
</feature>
<feature type="transmembrane region" description="Helical" evidence="2">
    <location>
        <begin position="261"/>
        <end position="281"/>
    </location>
</feature>
<feature type="transmembrane region" description="Helical" evidence="2">
    <location>
        <begin position="288"/>
        <end position="308"/>
    </location>
</feature>
<organism>
    <name type="scientific">Yersinia pseudotuberculosis serotype I (strain IP32953)</name>
    <dbReference type="NCBI Taxonomy" id="273123"/>
    <lineage>
        <taxon>Bacteria</taxon>
        <taxon>Pseudomonadati</taxon>
        <taxon>Pseudomonadota</taxon>
        <taxon>Gammaproteobacteria</taxon>
        <taxon>Enterobacterales</taxon>
        <taxon>Yersiniaceae</taxon>
        <taxon>Yersinia</taxon>
    </lineage>
</organism>
<gene>
    <name type="primary">lsrD</name>
    <name type="ordered locus">YPTB0550</name>
</gene>
<comment type="function">
    <text evidence="1">Part of the ABC transporter complex LsrABCD involved in autoinducer 2 (AI-2) import. Probably responsible for the translocation of the substrate across the membrane (By similarity).</text>
</comment>
<comment type="subunit">
    <text evidence="1">The complex is composed of two ATP-binding proteins (LsrA), two transmembrane proteins (LsrC and LsrD) and a solute-binding protein (LsrB).</text>
</comment>
<comment type="subcellular location">
    <subcellularLocation>
        <location evidence="1">Cell inner membrane</location>
        <topology evidence="1">Multi-pass membrane protein</topology>
    </subcellularLocation>
</comment>
<comment type="similarity">
    <text evidence="3">Belongs to the binding-protein-dependent transport system permease family. AraH/RbsC subfamily.</text>
</comment>
<accession>Q66EZ1</accession>
<proteinExistence type="inferred from homology"/>
<name>LSRD_YERPS</name>
<dbReference type="EMBL" id="BX936398">
    <property type="protein sequence ID" value="CAH19790.1"/>
    <property type="molecule type" value="Genomic_DNA"/>
</dbReference>
<dbReference type="RefSeq" id="WP_011191663.1">
    <property type="nucleotide sequence ID" value="NC_006155.1"/>
</dbReference>
<dbReference type="GeneID" id="49787447"/>
<dbReference type="KEGG" id="ypo:BZ17_2009"/>
<dbReference type="KEGG" id="yps:YPTB0550"/>
<dbReference type="PATRIC" id="fig|273123.14.peg.2135"/>
<dbReference type="Proteomes" id="UP000001011">
    <property type="component" value="Chromosome"/>
</dbReference>
<dbReference type="GO" id="GO:0005886">
    <property type="term" value="C:plasma membrane"/>
    <property type="evidence" value="ECO:0007669"/>
    <property type="project" value="UniProtKB-SubCell"/>
</dbReference>
<dbReference type="GO" id="GO:0022857">
    <property type="term" value="F:transmembrane transporter activity"/>
    <property type="evidence" value="ECO:0007669"/>
    <property type="project" value="InterPro"/>
</dbReference>
<dbReference type="CDD" id="cd06579">
    <property type="entry name" value="TM_PBP1_transp_AraH_like"/>
    <property type="match status" value="1"/>
</dbReference>
<dbReference type="InterPro" id="IPR001851">
    <property type="entry name" value="ABC_transp_permease"/>
</dbReference>
<dbReference type="NCBIfam" id="NF011612">
    <property type="entry name" value="PRK15038.1"/>
    <property type="match status" value="1"/>
</dbReference>
<dbReference type="PANTHER" id="PTHR32196">
    <property type="entry name" value="ABC TRANSPORTER PERMEASE PROTEIN YPHD-RELATED-RELATED"/>
    <property type="match status" value="1"/>
</dbReference>
<dbReference type="PANTHER" id="PTHR32196:SF71">
    <property type="entry name" value="AUTOINDUCER 2 IMPORT SYSTEM PERMEASE PROTEIN LSRD"/>
    <property type="match status" value="1"/>
</dbReference>
<dbReference type="Pfam" id="PF02653">
    <property type="entry name" value="BPD_transp_2"/>
    <property type="match status" value="1"/>
</dbReference>
<reference key="1">
    <citation type="journal article" date="2004" name="Proc. Natl. Acad. Sci. U.S.A.">
        <title>Insights into the evolution of Yersinia pestis through whole-genome comparison with Yersinia pseudotuberculosis.</title>
        <authorList>
            <person name="Chain P.S.G."/>
            <person name="Carniel E."/>
            <person name="Larimer F.W."/>
            <person name="Lamerdin J."/>
            <person name="Stoutland P.O."/>
            <person name="Regala W.M."/>
            <person name="Georgescu A.M."/>
            <person name="Vergez L.M."/>
            <person name="Land M.L."/>
            <person name="Motin V.L."/>
            <person name="Brubaker R.R."/>
            <person name="Fowler J."/>
            <person name="Hinnebusch J."/>
            <person name="Marceau M."/>
            <person name="Medigue C."/>
            <person name="Simonet M."/>
            <person name="Chenal-Francisque V."/>
            <person name="Souza B."/>
            <person name="Dacheux D."/>
            <person name="Elliott J.M."/>
            <person name="Derbise A."/>
            <person name="Hauser L.J."/>
            <person name="Garcia E."/>
        </authorList>
    </citation>
    <scope>NUCLEOTIDE SEQUENCE [LARGE SCALE GENOMIC DNA]</scope>
    <source>
        <strain>IP32953</strain>
    </source>
</reference>
<sequence length="333" mass="35118">MNLYRRYGWELTLAALLVLEILLFGLSNSRMLDINVLLFSTSDFICIGIVALPLTMVIVSGGIDISFGSTIGLCAIFLGIVFQAGVPMSVAIPLTVLVGALCGLINAGLILYTGVNPLVITLGTLYLFGGSALLLSGLSGATGYEGIGGFPAAFTDFANQTLFGLPIPLVIFMLCVLLFWLLMHRTHSGRHVFLIGQSSRVARYSALPIARTLCMLYAMTGVASAIAAILLVSYFGSARSDLGASFLMPAITAVVLGGANIYGGSGSILGTALAVLLVGYLQQGLQMIGTPNQISSALSGALLILVVVGRSISLHRHLIYEWLQRRRSRKASA</sequence>
<evidence type="ECO:0000250" key="1"/>
<evidence type="ECO:0000255" key="2"/>
<evidence type="ECO:0000305" key="3"/>
<protein>
    <recommendedName>
        <fullName>Autoinducer 2 import system permease protein LsrD</fullName>
        <shortName>AI-2 import system permease protein LsrD</shortName>
    </recommendedName>
</protein>
<keyword id="KW-0997">Cell inner membrane</keyword>
<keyword id="KW-1003">Cell membrane</keyword>
<keyword id="KW-0472">Membrane</keyword>
<keyword id="KW-0812">Transmembrane</keyword>
<keyword id="KW-1133">Transmembrane helix</keyword>
<keyword id="KW-0813">Transport</keyword>